<dbReference type="EMBL" id="L77117">
    <property type="protein sequence ID" value="AAB98449.1"/>
    <property type="molecule type" value="Genomic_DNA"/>
</dbReference>
<dbReference type="PIR" id="D64357">
    <property type="entry name" value="D64357"/>
</dbReference>
<dbReference type="SMR" id="P54033"/>
<dbReference type="FunCoup" id="P54033">
    <property type="interactions" value="191"/>
</dbReference>
<dbReference type="STRING" id="243232.MJ_0460"/>
<dbReference type="PaxDb" id="243232-MJ_0460"/>
<dbReference type="EnsemblBacteria" id="AAB98449">
    <property type="protein sequence ID" value="AAB98449"/>
    <property type="gene ID" value="MJ_0460"/>
</dbReference>
<dbReference type="KEGG" id="mja:MJ_0460"/>
<dbReference type="eggNOG" id="arCOG04098">
    <property type="taxonomic scope" value="Archaea"/>
</dbReference>
<dbReference type="HOGENOM" id="CLU_083987_0_2_2"/>
<dbReference type="InParanoid" id="P54033"/>
<dbReference type="PhylomeDB" id="P54033"/>
<dbReference type="Proteomes" id="UP000000805">
    <property type="component" value="Chromosome"/>
</dbReference>
<dbReference type="GO" id="GO:0022625">
    <property type="term" value="C:cytosolic large ribosomal subunit"/>
    <property type="evidence" value="ECO:0000318"/>
    <property type="project" value="GO_Central"/>
</dbReference>
<dbReference type="GO" id="GO:0019843">
    <property type="term" value="F:rRNA binding"/>
    <property type="evidence" value="ECO:0007669"/>
    <property type="project" value="UniProtKB-UniRule"/>
</dbReference>
<dbReference type="GO" id="GO:0003735">
    <property type="term" value="F:structural constituent of ribosome"/>
    <property type="evidence" value="ECO:0000318"/>
    <property type="project" value="GO_Central"/>
</dbReference>
<dbReference type="GO" id="GO:0002181">
    <property type="term" value="P:cytoplasmic translation"/>
    <property type="evidence" value="ECO:0000318"/>
    <property type="project" value="GO_Central"/>
</dbReference>
<dbReference type="CDD" id="cd00336">
    <property type="entry name" value="Ribosomal_L22"/>
    <property type="match status" value="1"/>
</dbReference>
<dbReference type="FunFam" id="3.90.470.10:FF:000015">
    <property type="entry name" value="50S ribosomal protein L22"/>
    <property type="match status" value="1"/>
</dbReference>
<dbReference type="Gene3D" id="3.90.470.10">
    <property type="entry name" value="Ribosomal protein L22/L17"/>
    <property type="match status" value="1"/>
</dbReference>
<dbReference type="HAMAP" id="MF_01331_A">
    <property type="entry name" value="Ribosomal_uL22_A"/>
    <property type="match status" value="1"/>
</dbReference>
<dbReference type="InterPro" id="IPR001063">
    <property type="entry name" value="Ribosomal_uL22"/>
</dbReference>
<dbReference type="InterPro" id="IPR018260">
    <property type="entry name" value="Ribosomal_uL22_CS"/>
</dbReference>
<dbReference type="InterPro" id="IPR005721">
    <property type="entry name" value="Ribosomal_uL22_euk/arc"/>
</dbReference>
<dbReference type="InterPro" id="IPR036394">
    <property type="entry name" value="Ribosomal_uL22_sf"/>
</dbReference>
<dbReference type="NCBIfam" id="NF003260">
    <property type="entry name" value="PRK04223.1"/>
    <property type="match status" value="1"/>
</dbReference>
<dbReference type="NCBIfam" id="TIGR01038">
    <property type="entry name" value="uL22_arch_euk"/>
    <property type="match status" value="1"/>
</dbReference>
<dbReference type="PANTHER" id="PTHR11593">
    <property type="entry name" value="60S RIBOSOMAL PROTEIN L17"/>
    <property type="match status" value="1"/>
</dbReference>
<dbReference type="PANTHER" id="PTHR11593:SF10">
    <property type="entry name" value="60S RIBOSOMAL PROTEIN L17"/>
    <property type="match status" value="1"/>
</dbReference>
<dbReference type="Pfam" id="PF00237">
    <property type="entry name" value="Ribosomal_L22"/>
    <property type="match status" value="1"/>
</dbReference>
<dbReference type="SUPFAM" id="SSF54843">
    <property type="entry name" value="Ribosomal protein L22"/>
    <property type="match status" value="1"/>
</dbReference>
<dbReference type="PROSITE" id="PS00464">
    <property type="entry name" value="RIBOSOMAL_L22"/>
    <property type="match status" value="1"/>
</dbReference>
<organism>
    <name type="scientific">Methanocaldococcus jannaschii (strain ATCC 43067 / DSM 2661 / JAL-1 / JCM 10045 / NBRC 100440)</name>
    <name type="common">Methanococcus jannaschii</name>
    <dbReference type="NCBI Taxonomy" id="243232"/>
    <lineage>
        <taxon>Archaea</taxon>
        <taxon>Methanobacteriati</taxon>
        <taxon>Methanobacteriota</taxon>
        <taxon>Methanomada group</taxon>
        <taxon>Methanococci</taxon>
        <taxon>Methanococcales</taxon>
        <taxon>Methanocaldococcaceae</taxon>
        <taxon>Methanocaldococcus</taxon>
    </lineage>
</organism>
<reference key="1">
    <citation type="journal article" date="1996" name="Science">
        <title>Complete genome sequence of the methanogenic archaeon, Methanococcus jannaschii.</title>
        <authorList>
            <person name="Bult C.J."/>
            <person name="White O."/>
            <person name="Olsen G.J."/>
            <person name="Zhou L."/>
            <person name="Fleischmann R.D."/>
            <person name="Sutton G.G."/>
            <person name="Blake J.A."/>
            <person name="FitzGerald L.M."/>
            <person name="Clayton R.A."/>
            <person name="Gocayne J.D."/>
            <person name="Kerlavage A.R."/>
            <person name="Dougherty B.A."/>
            <person name="Tomb J.-F."/>
            <person name="Adams M.D."/>
            <person name="Reich C.I."/>
            <person name="Overbeek R."/>
            <person name="Kirkness E.F."/>
            <person name="Weinstock K.G."/>
            <person name="Merrick J.M."/>
            <person name="Glodek A."/>
            <person name="Scott J.L."/>
            <person name="Geoghagen N.S.M."/>
            <person name="Weidman J.F."/>
            <person name="Fuhrmann J.L."/>
            <person name="Nguyen D."/>
            <person name="Utterback T.R."/>
            <person name="Kelley J.M."/>
            <person name="Peterson J.D."/>
            <person name="Sadow P.W."/>
            <person name="Hanna M.C."/>
            <person name="Cotton M.D."/>
            <person name="Roberts K.M."/>
            <person name="Hurst M.A."/>
            <person name="Kaine B.P."/>
            <person name="Borodovsky M."/>
            <person name="Klenk H.-P."/>
            <person name="Fraser C.M."/>
            <person name="Smith H.O."/>
            <person name="Woese C.R."/>
            <person name="Venter J.C."/>
        </authorList>
    </citation>
    <scope>NUCLEOTIDE SEQUENCE [LARGE SCALE GENOMIC DNA]</scope>
    <source>
        <strain>ATCC 43067 / DSM 2661 / JAL-1 / JCM 10045 / NBRC 100440</strain>
    </source>
</reference>
<accession>P54033</accession>
<evidence type="ECO:0000255" key="1">
    <source>
        <dbReference type="HAMAP-Rule" id="MF_01331"/>
    </source>
</evidence>
<evidence type="ECO:0000305" key="2"/>
<gene>
    <name evidence="1" type="primary">rpl22</name>
    <name type="ordered locus">MJ0460</name>
</gene>
<comment type="function">
    <text evidence="1">This protein binds specifically to 23S rRNA. It makes multiple contacts with different domains of the 23S rRNA in the assembled 50S subunit and ribosome.</text>
</comment>
<comment type="function">
    <text evidence="1">The globular domain of the protein is located near the polypeptide exit tunnel on the outside of the subunit, while an extended beta-hairpin is found that lines the wall of the exit tunnel in the center of the 70S ribosome.</text>
</comment>
<comment type="subunit">
    <text evidence="1">Part of the 50S ribosomal subunit.</text>
</comment>
<comment type="similarity">
    <text evidence="1">Belongs to the universal ribosomal protein uL22 family.</text>
</comment>
<feature type="chain" id="PRO_0000125275" description="Large ribosomal subunit protein uL22">
    <location>
        <begin position="1"/>
        <end position="156"/>
    </location>
</feature>
<sequence length="156" mass="18039">MIMMGKLKYKIQVNPEKTARAMGRNIPISRKHAREICKSINGMKLDEAIKFLEDVIAMRRPVLFRRHCKKVGHRKGKLGWPAGRYPVKAAKAILKILQHAKANAEYKGLNTEKLRIKHISTNKGITIKRYMPRAFGRATPKFQETVHIQVILEEYH</sequence>
<proteinExistence type="inferred from homology"/>
<keyword id="KW-1185">Reference proteome</keyword>
<keyword id="KW-0687">Ribonucleoprotein</keyword>
<keyword id="KW-0689">Ribosomal protein</keyword>
<keyword id="KW-0694">RNA-binding</keyword>
<keyword id="KW-0699">rRNA-binding</keyword>
<name>RL22_METJA</name>
<protein>
    <recommendedName>
        <fullName evidence="1">Large ribosomal subunit protein uL22</fullName>
    </recommendedName>
    <alternativeName>
        <fullName evidence="2">50S ribosomal protein L22</fullName>
    </alternativeName>
</protein>